<accession>Q8N0N9</accession>
<reference evidence="4" key="1">
    <citation type="journal article" date="2004" name="Mar. Biotechnol.">
        <title>Complementary DNA cloning and molecular evolution of opine dehydrogenases in some marine invertebrates.</title>
        <authorList>
            <person name="Kimura T."/>
            <person name="Nakano T."/>
            <person name="Yamaguchi T."/>
            <person name="Sato M."/>
            <person name="Ogawa T."/>
            <person name="Muramoto K."/>
            <person name="Yokoyama T."/>
            <person name="Kan-No N."/>
            <person name="Nagahisa E."/>
            <person name="Janssen F."/>
            <person name="Grieshaber M.K."/>
        </authorList>
    </citation>
    <scope>NUCLEOTIDE SEQUENCE [MRNA]</scope>
    <source>
        <tissue evidence="2">Muscle</tissue>
    </source>
</reference>
<feature type="chain" id="PRO_0000413661" description="Opine dehydrogenase">
    <location>
        <begin position="1"/>
        <end position="405"/>
    </location>
</feature>
<organism>
    <name type="scientific">Haliotis discus hannai</name>
    <name type="common">Japanese abalone</name>
    <dbReference type="NCBI Taxonomy" id="42344"/>
    <lineage>
        <taxon>Eukaryota</taxon>
        <taxon>Metazoa</taxon>
        <taxon>Spiralia</taxon>
        <taxon>Lophotrochozoa</taxon>
        <taxon>Mollusca</taxon>
        <taxon>Gastropoda</taxon>
        <taxon>Vetigastropoda</taxon>
        <taxon>Lepetellida</taxon>
        <taxon>Haliotoidea</taxon>
        <taxon>Haliotidae</taxon>
        <taxon>Haliotis</taxon>
    </lineage>
</organism>
<protein>
    <recommendedName>
        <fullName evidence="3">Opine dehydrogenase</fullName>
        <ecNumber evidence="3">1.5.1.-</ecNumber>
    </recommendedName>
</protein>
<gene>
    <name evidence="4" type="primary">tadh</name>
</gene>
<keyword id="KW-0520">NAD</keyword>
<keyword id="KW-0560">Oxidoreductase</keyword>
<proteinExistence type="evidence at transcript level"/>
<evidence type="ECO:0000255" key="1"/>
<evidence type="ECO:0000269" key="2">
    <source>
    </source>
</evidence>
<evidence type="ECO:0000303" key="3">
    <source>
    </source>
</evidence>
<evidence type="ECO:0000312" key="4">
    <source>
        <dbReference type="EMBL" id="BAB92088.1"/>
    </source>
</evidence>
<sequence length="405" mass="45065">MTKKITVLVCGGGNGAHVTAGLAASRDDIETRVLTTFADEAERWTNIMKENDLRITVDEGDIKSGESVDFKVKLNCITKDPSKAVPGADVIIFTVPAFAHQSYLEAIEPYIQPNTTIVGMPGQPGFEFQVFDVLKDKAKQCVIMSFESLPWACRIAEFGKFVQILMVKVNLMGCLIRGQSKPSYDPMEAVQRVMGKAPILTQANNYIEPILATKSIIHPPIMYGKWKDWDGKPIEEKPLFYQGLDEEQARYLGGISDELVATAKAIAAQKPEVDLSGVLHLYDWYLRDHKPYIKDTTSLLTVLQTDTAYDGLVHPMKETEDGKFVPDFRYRYLTEDVPNGLVVTKGLAQIAGVPTPYHDEVIAWCQKQLGKEIIVGDELKGKDIGSTRCPQRYGINTMDALVNIM</sequence>
<comment type="similarity">
    <text evidence="1">Belongs to the lysopine/nopaline/octopine/opine/vitopine dehydrogenases family.</text>
</comment>
<name>ODH_HALDH</name>
<dbReference type="EC" id="1.5.1.-" evidence="3"/>
<dbReference type="EMBL" id="AB085184">
    <property type="protein sequence ID" value="BAB92088.1"/>
    <property type="molecule type" value="mRNA"/>
</dbReference>
<dbReference type="SMR" id="Q8N0N9"/>
<dbReference type="GO" id="GO:0016491">
    <property type="term" value="F:oxidoreductase activity"/>
    <property type="evidence" value="ECO:0007669"/>
    <property type="project" value="UniProtKB-KW"/>
</dbReference>
<dbReference type="Gene3D" id="1.10.1040.10">
    <property type="entry name" value="N-(1-d-carboxylethyl)-l-norvaline Dehydrogenase, domain 2"/>
    <property type="match status" value="1"/>
</dbReference>
<dbReference type="Gene3D" id="3.40.50.720">
    <property type="entry name" value="NAD(P)-binding Rossmann-like Domain"/>
    <property type="match status" value="1"/>
</dbReference>
<dbReference type="InterPro" id="IPR008927">
    <property type="entry name" value="6-PGluconate_DH-like_C_sf"/>
</dbReference>
<dbReference type="InterPro" id="IPR013328">
    <property type="entry name" value="6PGD_dom2"/>
</dbReference>
<dbReference type="InterPro" id="IPR036291">
    <property type="entry name" value="NAD(P)-bd_dom_sf"/>
</dbReference>
<dbReference type="InterPro" id="IPR051729">
    <property type="entry name" value="Opine/Lysopine_DH"/>
</dbReference>
<dbReference type="InterPro" id="IPR003421">
    <property type="entry name" value="Opine_DH"/>
</dbReference>
<dbReference type="PANTHER" id="PTHR38015">
    <property type="entry name" value="BLR6086 PROTEIN"/>
    <property type="match status" value="1"/>
</dbReference>
<dbReference type="PANTHER" id="PTHR38015:SF1">
    <property type="entry name" value="OPINE DEHYDROGENASE DOMAIN-CONTAINING PROTEIN"/>
    <property type="match status" value="1"/>
</dbReference>
<dbReference type="Pfam" id="PF02317">
    <property type="entry name" value="Octopine_DH"/>
    <property type="match status" value="1"/>
</dbReference>
<dbReference type="SUPFAM" id="SSF48179">
    <property type="entry name" value="6-phosphogluconate dehydrogenase C-terminal domain-like"/>
    <property type="match status" value="1"/>
</dbReference>
<dbReference type="SUPFAM" id="SSF51735">
    <property type="entry name" value="NAD(P)-binding Rossmann-fold domains"/>
    <property type="match status" value="1"/>
</dbReference>